<feature type="chain" id="PRO_0000389658" description="Acetyl-coenzyme A carboxylase carboxyl transferase subunit beta">
    <location>
        <begin position="1"/>
        <end position="298"/>
    </location>
</feature>
<feature type="domain" description="CoA carboxyltransferase N-terminal" evidence="2">
    <location>
        <begin position="41"/>
        <end position="298"/>
    </location>
</feature>
<feature type="zinc finger region" description="C4-type" evidence="1">
    <location>
        <begin position="45"/>
        <end position="67"/>
    </location>
</feature>
<feature type="region of interest" description="Disordered" evidence="3">
    <location>
        <begin position="1"/>
        <end position="21"/>
    </location>
</feature>
<feature type="binding site" evidence="1">
    <location>
        <position position="45"/>
    </location>
    <ligand>
        <name>Zn(2+)</name>
        <dbReference type="ChEBI" id="CHEBI:29105"/>
    </ligand>
</feature>
<feature type="binding site" evidence="1">
    <location>
        <position position="48"/>
    </location>
    <ligand>
        <name>Zn(2+)</name>
        <dbReference type="ChEBI" id="CHEBI:29105"/>
    </ligand>
</feature>
<feature type="binding site" evidence="1">
    <location>
        <position position="64"/>
    </location>
    <ligand>
        <name>Zn(2+)</name>
        <dbReference type="ChEBI" id="CHEBI:29105"/>
    </ligand>
</feature>
<feature type="binding site" evidence="1">
    <location>
        <position position="67"/>
    </location>
    <ligand>
        <name>Zn(2+)</name>
        <dbReference type="ChEBI" id="CHEBI:29105"/>
    </ligand>
</feature>
<name>ACCD_ACIBY</name>
<keyword id="KW-0067">ATP-binding</keyword>
<keyword id="KW-0963">Cytoplasm</keyword>
<keyword id="KW-0275">Fatty acid biosynthesis</keyword>
<keyword id="KW-0276">Fatty acid metabolism</keyword>
<keyword id="KW-0444">Lipid biosynthesis</keyword>
<keyword id="KW-0443">Lipid metabolism</keyword>
<keyword id="KW-0479">Metal-binding</keyword>
<keyword id="KW-0547">Nucleotide-binding</keyword>
<keyword id="KW-0808">Transferase</keyword>
<keyword id="KW-0862">Zinc</keyword>
<keyword id="KW-0863">Zinc-finger</keyword>
<protein>
    <recommendedName>
        <fullName evidence="1">Acetyl-coenzyme A carboxylase carboxyl transferase subunit beta</fullName>
        <shortName evidence="1">ACCase subunit beta</shortName>
        <shortName evidence="1">Acetyl-CoA carboxylase carboxyltransferase subunit beta</shortName>
        <ecNumber evidence="1">2.1.3.15</ecNumber>
    </recommendedName>
</protein>
<evidence type="ECO:0000255" key="1">
    <source>
        <dbReference type="HAMAP-Rule" id="MF_01395"/>
    </source>
</evidence>
<evidence type="ECO:0000255" key="2">
    <source>
        <dbReference type="PROSITE-ProRule" id="PRU01136"/>
    </source>
</evidence>
<evidence type="ECO:0000256" key="3">
    <source>
        <dbReference type="SAM" id="MobiDB-lite"/>
    </source>
</evidence>
<gene>
    <name evidence="1" type="primary">accD</name>
    <name type="ordered locus">ABAYE0614</name>
</gene>
<dbReference type="EC" id="2.1.3.15" evidence="1"/>
<dbReference type="EMBL" id="CU459141">
    <property type="protein sequence ID" value="CAM85581.1"/>
    <property type="molecule type" value="Genomic_DNA"/>
</dbReference>
<dbReference type="RefSeq" id="WP_001071168.1">
    <property type="nucleotide sequence ID" value="NZ_JBDGFB010000017.1"/>
</dbReference>
<dbReference type="SMR" id="B0V530"/>
<dbReference type="EnsemblBacteria" id="CAM85581">
    <property type="protein sequence ID" value="CAM85581"/>
    <property type="gene ID" value="ABAYE0614"/>
</dbReference>
<dbReference type="GeneID" id="92895146"/>
<dbReference type="KEGG" id="aby:ABAYE0614"/>
<dbReference type="HOGENOM" id="CLU_015486_1_0_6"/>
<dbReference type="UniPathway" id="UPA00655">
    <property type="reaction ID" value="UER00711"/>
</dbReference>
<dbReference type="GO" id="GO:0009329">
    <property type="term" value="C:acetate CoA-transferase complex"/>
    <property type="evidence" value="ECO:0007669"/>
    <property type="project" value="TreeGrafter"/>
</dbReference>
<dbReference type="GO" id="GO:0003989">
    <property type="term" value="F:acetyl-CoA carboxylase activity"/>
    <property type="evidence" value="ECO:0007669"/>
    <property type="project" value="InterPro"/>
</dbReference>
<dbReference type="GO" id="GO:0005524">
    <property type="term" value="F:ATP binding"/>
    <property type="evidence" value="ECO:0007669"/>
    <property type="project" value="UniProtKB-KW"/>
</dbReference>
<dbReference type="GO" id="GO:0016743">
    <property type="term" value="F:carboxyl- or carbamoyltransferase activity"/>
    <property type="evidence" value="ECO:0007669"/>
    <property type="project" value="UniProtKB-UniRule"/>
</dbReference>
<dbReference type="GO" id="GO:0008270">
    <property type="term" value="F:zinc ion binding"/>
    <property type="evidence" value="ECO:0007669"/>
    <property type="project" value="UniProtKB-UniRule"/>
</dbReference>
<dbReference type="GO" id="GO:0006633">
    <property type="term" value="P:fatty acid biosynthetic process"/>
    <property type="evidence" value="ECO:0007669"/>
    <property type="project" value="UniProtKB-KW"/>
</dbReference>
<dbReference type="GO" id="GO:2001295">
    <property type="term" value="P:malonyl-CoA biosynthetic process"/>
    <property type="evidence" value="ECO:0007669"/>
    <property type="project" value="UniProtKB-UniRule"/>
</dbReference>
<dbReference type="Gene3D" id="3.90.226.10">
    <property type="entry name" value="2-enoyl-CoA Hydratase, Chain A, domain 1"/>
    <property type="match status" value="1"/>
</dbReference>
<dbReference type="HAMAP" id="MF_01395">
    <property type="entry name" value="AcetylCoA_CT_beta"/>
    <property type="match status" value="1"/>
</dbReference>
<dbReference type="InterPro" id="IPR034733">
    <property type="entry name" value="AcCoA_carboxyl_beta"/>
</dbReference>
<dbReference type="InterPro" id="IPR000438">
    <property type="entry name" value="Acetyl_CoA_COase_Trfase_b_su"/>
</dbReference>
<dbReference type="InterPro" id="IPR029045">
    <property type="entry name" value="ClpP/crotonase-like_dom_sf"/>
</dbReference>
<dbReference type="InterPro" id="IPR011762">
    <property type="entry name" value="COA_CT_N"/>
</dbReference>
<dbReference type="NCBIfam" id="TIGR00515">
    <property type="entry name" value="accD"/>
    <property type="match status" value="1"/>
</dbReference>
<dbReference type="PANTHER" id="PTHR42995">
    <property type="entry name" value="ACETYL-COENZYME A CARBOXYLASE CARBOXYL TRANSFERASE SUBUNIT BETA, CHLOROPLASTIC"/>
    <property type="match status" value="1"/>
</dbReference>
<dbReference type="PANTHER" id="PTHR42995:SF5">
    <property type="entry name" value="ACETYL-COENZYME A CARBOXYLASE CARBOXYL TRANSFERASE SUBUNIT BETA, CHLOROPLASTIC"/>
    <property type="match status" value="1"/>
</dbReference>
<dbReference type="Pfam" id="PF01039">
    <property type="entry name" value="Carboxyl_trans"/>
    <property type="match status" value="1"/>
</dbReference>
<dbReference type="PRINTS" id="PR01070">
    <property type="entry name" value="ACCCTRFRASEB"/>
</dbReference>
<dbReference type="SUPFAM" id="SSF52096">
    <property type="entry name" value="ClpP/crotonase"/>
    <property type="match status" value="1"/>
</dbReference>
<dbReference type="PROSITE" id="PS50980">
    <property type="entry name" value="COA_CT_NTER"/>
    <property type="match status" value="1"/>
</dbReference>
<comment type="function">
    <text evidence="1">Component of the acetyl coenzyme A carboxylase (ACC) complex. Biotin carboxylase (BC) catalyzes the carboxylation of biotin on its carrier protein (BCCP) and then the CO(2) group is transferred by the transcarboxylase to acetyl-CoA to form malonyl-CoA.</text>
</comment>
<comment type="catalytic activity">
    <reaction evidence="1">
        <text>N(6)-carboxybiotinyl-L-lysyl-[protein] + acetyl-CoA = N(6)-biotinyl-L-lysyl-[protein] + malonyl-CoA</text>
        <dbReference type="Rhea" id="RHEA:54728"/>
        <dbReference type="Rhea" id="RHEA-COMP:10505"/>
        <dbReference type="Rhea" id="RHEA-COMP:10506"/>
        <dbReference type="ChEBI" id="CHEBI:57288"/>
        <dbReference type="ChEBI" id="CHEBI:57384"/>
        <dbReference type="ChEBI" id="CHEBI:83144"/>
        <dbReference type="ChEBI" id="CHEBI:83145"/>
        <dbReference type="EC" id="2.1.3.15"/>
    </reaction>
</comment>
<comment type="cofactor">
    <cofactor evidence="1">
        <name>Zn(2+)</name>
        <dbReference type="ChEBI" id="CHEBI:29105"/>
    </cofactor>
    <text evidence="1">Binds 1 zinc ion per subunit.</text>
</comment>
<comment type="pathway">
    <text evidence="1">Lipid metabolism; malonyl-CoA biosynthesis; malonyl-CoA from acetyl-CoA: step 1/1.</text>
</comment>
<comment type="subunit">
    <text evidence="1">Acetyl-CoA carboxylase is a heterohexamer composed of biotin carboxyl carrier protein (AccB), biotin carboxylase (AccC) and two subunits each of ACCase subunit alpha (AccA) and ACCase subunit beta (AccD).</text>
</comment>
<comment type="subcellular location">
    <subcellularLocation>
        <location evidence="1">Cytoplasm</location>
    </subcellularLocation>
</comment>
<comment type="similarity">
    <text evidence="1">Belongs to the AccD/PCCB family.</text>
</comment>
<reference key="1">
    <citation type="journal article" date="2008" name="PLoS ONE">
        <title>Comparative analysis of Acinetobacters: three genomes for three lifestyles.</title>
        <authorList>
            <person name="Vallenet D."/>
            <person name="Nordmann P."/>
            <person name="Barbe V."/>
            <person name="Poirel L."/>
            <person name="Mangenot S."/>
            <person name="Bataille E."/>
            <person name="Dossat C."/>
            <person name="Gas S."/>
            <person name="Kreimeyer A."/>
            <person name="Lenoble P."/>
            <person name="Oztas S."/>
            <person name="Poulain J."/>
            <person name="Segurens B."/>
            <person name="Robert C."/>
            <person name="Abergel C."/>
            <person name="Claverie J.-M."/>
            <person name="Raoult D."/>
            <person name="Medigue C."/>
            <person name="Weissenbach J."/>
            <person name="Cruveiller S."/>
        </authorList>
    </citation>
    <scope>NUCLEOTIDE SEQUENCE [LARGE SCALE GENOMIC DNA]</scope>
    <source>
        <strain>AYE</strain>
    </source>
</reference>
<proteinExistence type="inferred from homology"/>
<accession>B0V530</accession>
<sequence>MNQEVKSGKVLSPSTPWTQRPVPGIEVADEQQTLKATFTEPTIECPECHALVTRTAISFNAYVCPQCDEHLRMKARDRLNWFFDNVVAELGQEFSAKDPLKFVDSKPYPDRMREAQTKTGETEALIAMQGNLNGVDMIACAFEFDFMGGSMGTVVGDRFVKAAELAIEKRQPLICFAASGGARMQEGMLSLMQMARTSAAIQKLKDAGLPYIVVLTHPVYGGVTASLAMLGDIHIAEPKAMIGFAGKRVIEQTVRETLEEPFQRAEYLLDHGVVDQIVHRHALRDTVSRLVSKLMNLP</sequence>
<organism>
    <name type="scientific">Acinetobacter baumannii (strain AYE)</name>
    <dbReference type="NCBI Taxonomy" id="509173"/>
    <lineage>
        <taxon>Bacteria</taxon>
        <taxon>Pseudomonadati</taxon>
        <taxon>Pseudomonadota</taxon>
        <taxon>Gammaproteobacteria</taxon>
        <taxon>Moraxellales</taxon>
        <taxon>Moraxellaceae</taxon>
        <taxon>Acinetobacter</taxon>
        <taxon>Acinetobacter calcoaceticus/baumannii complex</taxon>
    </lineage>
</organism>